<name>EF1G_PIG</name>
<dbReference type="EMBL" id="AF480162">
    <property type="protein sequence ID" value="AAL85414.1"/>
    <property type="molecule type" value="mRNA"/>
</dbReference>
<dbReference type="EMBL" id="F14608">
    <property type="protein sequence ID" value="CAA23152.1"/>
    <property type="molecule type" value="mRNA"/>
</dbReference>
<dbReference type="BMRB" id="Q29387"/>
<dbReference type="SMR" id="Q29387"/>
<dbReference type="FunCoup" id="Q29387">
    <property type="interactions" value="2286"/>
</dbReference>
<dbReference type="STRING" id="9823.ENSSSCP00000013894"/>
<dbReference type="PaxDb" id="9823-ENSSSCP00000013894"/>
<dbReference type="PeptideAtlas" id="Q29387"/>
<dbReference type="eggNOG" id="KOG0867">
    <property type="taxonomic scope" value="Eukaryota"/>
</dbReference>
<dbReference type="eggNOG" id="KOG1627">
    <property type="taxonomic scope" value="Eukaryota"/>
</dbReference>
<dbReference type="HOGENOM" id="CLU_011226_3_1_1"/>
<dbReference type="InParanoid" id="Q29387"/>
<dbReference type="Proteomes" id="UP000008227">
    <property type="component" value="Unplaced"/>
</dbReference>
<dbReference type="Proteomes" id="UP000314985">
    <property type="component" value="Unplaced"/>
</dbReference>
<dbReference type="Proteomes" id="UP000694570">
    <property type="component" value="Unplaced"/>
</dbReference>
<dbReference type="Proteomes" id="UP000694571">
    <property type="component" value="Unplaced"/>
</dbReference>
<dbReference type="Proteomes" id="UP000694720">
    <property type="component" value="Unplaced"/>
</dbReference>
<dbReference type="Proteomes" id="UP000694722">
    <property type="component" value="Unplaced"/>
</dbReference>
<dbReference type="Proteomes" id="UP000694723">
    <property type="component" value="Unplaced"/>
</dbReference>
<dbReference type="Proteomes" id="UP000694724">
    <property type="component" value="Unplaced"/>
</dbReference>
<dbReference type="Proteomes" id="UP000694725">
    <property type="component" value="Unplaced"/>
</dbReference>
<dbReference type="Proteomes" id="UP000694726">
    <property type="component" value="Unplaced"/>
</dbReference>
<dbReference type="Proteomes" id="UP000694727">
    <property type="component" value="Unplaced"/>
</dbReference>
<dbReference type="Proteomes" id="UP000694728">
    <property type="component" value="Unplaced"/>
</dbReference>
<dbReference type="GO" id="GO:0005737">
    <property type="term" value="C:cytoplasm"/>
    <property type="evidence" value="ECO:0000318"/>
    <property type="project" value="GO_Central"/>
</dbReference>
<dbReference type="GO" id="GO:0005634">
    <property type="term" value="C:nucleus"/>
    <property type="evidence" value="ECO:0000318"/>
    <property type="project" value="GO_Central"/>
</dbReference>
<dbReference type="GO" id="GO:0003746">
    <property type="term" value="F:translation elongation factor activity"/>
    <property type="evidence" value="ECO:0007669"/>
    <property type="project" value="UniProtKB-KW"/>
</dbReference>
<dbReference type="GO" id="GO:0006414">
    <property type="term" value="P:translational elongation"/>
    <property type="evidence" value="ECO:0000318"/>
    <property type="project" value="GO_Central"/>
</dbReference>
<dbReference type="CDD" id="cd03181">
    <property type="entry name" value="GST_C_EF1Bgamma_like"/>
    <property type="match status" value="1"/>
</dbReference>
<dbReference type="CDD" id="cd03044">
    <property type="entry name" value="GST_N_EF1Bgamma"/>
    <property type="match status" value="1"/>
</dbReference>
<dbReference type="FunFam" id="1.20.1050.10:FF:000021">
    <property type="entry name" value="Elongation factor 1-gamma"/>
    <property type="match status" value="1"/>
</dbReference>
<dbReference type="FunFam" id="3.40.30.10:FF:000088">
    <property type="entry name" value="Elongation factor 1-gamma"/>
    <property type="match status" value="1"/>
</dbReference>
<dbReference type="FunFam" id="3.30.70.1010:FF:000001">
    <property type="entry name" value="Elongation factor 1-gamma 1"/>
    <property type="match status" value="1"/>
</dbReference>
<dbReference type="Gene3D" id="1.20.1050.10">
    <property type="match status" value="1"/>
</dbReference>
<dbReference type="Gene3D" id="3.40.30.10">
    <property type="entry name" value="Glutaredoxin"/>
    <property type="match status" value="1"/>
</dbReference>
<dbReference type="Gene3D" id="3.30.70.1010">
    <property type="entry name" value="Translation elongation factor EF1B, gamma chain, conserved domain"/>
    <property type="match status" value="1"/>
</dbReference>
<dbReference type="InterPro" id="IPR050802">
    <property type="entry name" value="EF-GSTs"/>
</dbReference>
<dbReference type="InterPro" id="IPR001662">
    <property type="entry name" value="EF1B_G_C"/>
</dbReference>
<dbReference type="InterPro" id="IPR036433">
    <property type="entry name" value="EF1B_G_C_sf"/>
</dbReference>
<dbReference type="InterPro" id="IPR010987">
    <property type="entry name" value="Glutathione-S-Trfase_C-like"/>
</dbReference>
<dbReference type="InterPro" id="IPR036282">
    <property type="entry name" value="Glutathione-S-Trfase_C_sf"/>
</dbReference>
<dbReference type="InterPro" id="IPR040079">
    <property type="entry name" value="Glutathione_S-Trfase"/>
</dbReference>
<dbReference type="InterPro" id="IPR004045">
    <property type="entry name" value="Glutathione_S-Trfase_N"/>
</dbReference>
<dbReference type="InterPro" id="IPR004046">
    <property type="entry name" value="GST_C"/>
</dbReference>
<dbReference type="InterPro" id="IPR036249">
    <property type="entry name" value="Thioredoxin-like_sf"/>
</dbReference>
<dbReference type="PANTHER" id="PTHR43986">
    <property type="entry name" value="ELONGATION FACTOR 1-GAMMA"/>
    <property type="match status" value="1"/>
</dbReference>
<dbReference type="PANTHER" id="PTHR43986:SF13">
    <property type="entry name" value="ELONGATION FACTOR 1-GAMMA"/>
    <property type="match status" value="1"/>
</dbReference>
<dbReference type="Pfam" id="PF00647">
    <property type="entry name" value="EF1G"/>
    <property type="match status" value="1"/>
</dbReference>
<dbReference type="Pfam" id="PF00043">
    <property type="entry name" value="GST_C"/>
    <property type="match status" value="1"/>
</dbReference>
<dbReference type="Pfam" id="PF02798">
    <property type="entry name" value="GST_N"/>
    <property type="match status" value="1"/>
</dbReference>
<dbReference type="SFLD" id="SFLDS00019">
    <property type="entry name" value="Glutathione_Transferase_(cytos"/>
    <property type="match status" value="1"/>
</dbReference>
<dbReference type="SFLD" id="SFLDG00358">
    <property type="entry name" value="Main_(cytGST)"/>
    <property type="match status" value="1"/>
</dbReference>
<dbReference type="SMART" id="SM01183">
    <property type="entry name" value="EF1G"/>
    <property type="match status" value="1"/>
</dbReference>
<dbReference type="SUPFAM" id="SSF89942">
    <property type="entry name" value="eEF1-gamma domain"/>
    <property type="match status" value="1"/>
</dbReference>
<dbReference type="SUPFAM" id="SSF47616">
    <property type="entry name" value="GST C-terminal domain-like"/>
    <property type="match status" value="1"/>
</dbReference>
<dbReference type="SUPFAM" id="SSF52833">
    <property type="entry name" value="Thioredoxin-like"/>
    <property type="match status" value="1"/>
</dbReference>
<dbReference type="PROSITE" id="PS50040">
    <property type="entry name" value="EF1G_C"/>
    <property type="match status" value="1"/>
</dbReference>
<dbReference type="PROSITE" id="PS50405">
    <property type="entry name" value="GST_CTER"/>
    <property type="match status" value="1"/>
</dbReference>
<dbReference type="PROSITE" id="PS50404">
    <property type="entry name" value="GST_NTER"/>
    <property type="match status" value="1"/>
</dbReference>
<sequence>LYTYPENWRAFKALIAAQYSGAQVRVLSAPPHFHFGQTNHTPEFLRKFPAGKVPAFEGDDGFCVFESNAIAYYVSNEELRGSTPEAAAQVVQWVSFADSDIVPPASTWVFPTLGIMHYNKQATENAKDEVRRVLGLLDAHLKTRTFLVGERVTLADITVVCTLLWLYKQVLEPSFRQAFPNTNRWFLTCINQPQFRAVLGEVKLCEKMAQFDAKKFAESQPKKDTPRKEKGSREEKQKPQAERKEEKKAAAPAPEEELDECEQALAAEPKAKDPFAHLPKSTFVLDEFKRKYSNEDTLSVALPYFWEHFDKDGWSLWYSEYRFPEELTQTFMSCNLITGMFQRLDKLRKNAFASVILFGTNNSSSISGVWVFRGQELAFPLSPDWQVDYESYTWRKLDPGSEETQTLVREYFSWEGAYQHVGKAFNQGKIFK</sequence>
<comment type="function">
    <text>Probably plays a role in anchoring the complex to other cellular components.</text>
</comment>
<comment type="subunit">
    <text>EF-1 is composed of four subunits: alpha, beta, delta, and gamma.</text>
</comment>
<organism>
    <name type="scientific">Sus scrofa</name>
    <name type="common">Pig</name>
    <dbReference type="NCBI Taxonomy" id="9823"/>
    <lineage>
        <taxon>Eukaryota</taxon>
        <taxon>Metazoa</taxon>
        <taxon>Chordata</taxon>
        <taxon>Craniata</taxon>
        <taxon>Vertebrata</taxon>
        <taxon>Euteleostomi</taxon>
        <taxon>Mammalia</taxon>
        <taxon>Eutheria</taxon>
        <taxon>Laurasiatheria</taxon>
        <taxon>Artiodactyla</taxon>
        <taxon>Suina</taxon>
        <taxon>Suidae</taxon>
        <taxon>Sus</taxon>
    </lineage>
</organism>
<gene>
    <name type="primary">EEF1G</name>
</gene>
<reference key="1">
    <citation type="submission" date="2002-01" db="EMBL/GenBank/DDBJ databases">
        <title>cDNA cloning of porcine eukaryotic elongation factor(eEF)-1 gamma-like protein.</title>
        <authorList>
            <person name="Kokuho T."/>
        </authorList>
    </citation>
    <scope>NUCLEOTIDE SEQUENCE [MRNA]</scope>
</reference>
<reference key="2">
    <citation type="journal article" date="1996" name="Mamm. Genome">
        <title>Evaluation and characterization of a porcine small intestine cDNA library: analysis of 839 clones.</title>
        <authorList>
            <person name="Winteroe A.K."/>
            <person name="Fredholm M."/>
            <person name="Davies W."/>
        </authorList>
    </citation>
    <scope>NUCLEOTIDE SEQUENCE [LARGE SCALE MRNA] OF 7-142</scope>
    <source>
        <tissue>Small intestine</tissue>
    </source>
</reference>
<accession>Q29387</accession>
<accession>Q8SPX8</accession>
<feature type="chain" id="PRO_0000208815" description="Elongation factor 1-gamma">
    <location>
        <begin position="1" status="less than"/>
        <end position="432"/>
    </location>
</feature>
<feature type="domain" description="GST N-terminal">
    <location>
        <begin position="1" status="less than"/>
        <end position="82"/>
    </location>
</feature>
<feature type="domain" description="GST C-terminal">
    <location>
        <begin position="83"/>
        <end position="211"/>
    </location>
</feature>
<feature type="domain" description="EF-1-gamma C-terminal" evidence="4">
    <location>
        <begin position="271"/>
        <end position="432"/>
    </location>
</feature>
<feature type="region of interest" description="Disordered" evidence="5">
    <location>
        <begin position="216"/>
        <end position="258"/>
    </location>
</feature>
<feature type="compositionally biased region" description="Basic and acidic residues" evidence="5">
    <location>
        <begin position="216"/>
        <end position="249"/>
    </location>
</feature>
<feature type="modified residue" description="N6-acetyllysine" evidence="2">
    <location>
        <position position="142"/>
    </location>
</feature>
<feature type="modified residue" description="N6-acetyllysine" evidence="3">
    <location>
        <position position="207"/>
    </location>
</feature>
<feature type="modified residue" description="N6-acetyllysine" evidence="3">
    <location>
        <position position="396"/>
    </location>
</feature>
<feature type="modified residue" description="N6-acetyllysine; alternate" evidence="2">
    <location>
        <position position="429"/>
    </location>
</feature>
<feature type="modified residue" description="N6-malonyllysine; alternate" evidence="1">
    <location>
        <position position="429"/>
    </location>
</feature>
<feature type="cross-link" description="Glycyl lysine isopeptide (Lys-Gly) (interchain with G-Cter in SUMO1)" evidence="2">
    <location>
        <position position="248"/>
    </location>
</feature>
<feature type="cross-link" description="Glycyl lysine isopeptide (Lys-Gly) (interchain with G-Cter in SUMO2)" evidence="2">
    <location>
        <position position="280"/>
    </location>
</feature>
<feature type="non-terminal residue">
    <location>
        <position position="1"/>
    </location>
</feature>
<proteinExistence type="evidence at transcript level"/>
<protein>
    <recommendedName>
        <fullName>Elongation factor 1-gamma</fullName>
        <shortName>EF-1-gamma</shortName>
    </recommendedName>
    <alternativeName>
        <fullName>eEF-1B gamma</fullName>
    </alternativeName>
</protein>
<keyword id="KW-0007">Acetylation</keyword>
<keyword id="KW-0251">Elongation factor</keyword>
<keyword id="KW-1017">Isopeptide bond</keyword>
<keyword id="KW-0648">Protein biosynthesis</keyword>
<keyword id="KW-1185">Reference proteome</keyword>
<keyword id="KW-0832">Ubl conjugation</keyword>
<evidence type="ECO:0000250" key="1"/>
<evidence type="ECO:0000250" key="2">
    <source>
        <dbReference type="UniProtKB" id="P26641"/>
    </source>
</evidence>
<evidence type="ECO:0000250" key="3">
    <source>
        <dbReference type="UniProtKB" id="Q9D8N0"/>
    </source>
</evidence>
<evidence type="ECO:0000255" key="4">
    <source>
        <dbReference type="PROSITE-ProRule" id="PRU00519"/>
    </source>
</evidence>
<evidence type="ECO:0000256" key="5">
    <source>
        <dbReference type="SAM" id="MobiDB-lite"/>
    </source>
</evidence>